<name>RFX6_AILME</name>
<organism>
    <name type="scientific">Ailuropoda melanoleuca</name>
    <name type="common">Giant panda</name>
    <dbReference type="NCBI Taxonomy" id="9646"/>
    <lineage>
        <taxon>Eukaryota</taxon>
        <taxon>Metazoa</taxon>
        <taxon>Chordata</taxon>
        <taxon>Craniata</taxon>
        <taxon>Vertebrata</taxon>
        <taxon>Euteleostomi</taxon>
        <taxon>Mammalia</taxon>
        <taxon>Eutheria</taxon>
        <taxon>Laurasiatheria</taxon>
        <taxon>Carnivora</taxon>
        <taxon>Caniformia</taxon>
        <taxon>Ursidae</taxon>
        <taxon>Ailuropoda</taxon>
    </lineage>
</organism>
<gene>
    <name type="primary">RFX6</name>
    <name type="ORF">PANDA_013423</name>
</gene>
<sequence length="928" mass="102414">MAKVPVLEDAFLPAQPSPQVSPEAQEECCVQLLGKGLLLYPEERVYLAAEAQPGGARGSAERGEHPELPVGVKSEMHLSNGNFSSEEEDGESHDSKTKAADLHLSQKKTITQMMKDKKKQTQLTLQWLEENYIVCEGVCLPRCILYAHYLDFCRKEKLEPACAATFGKTIRQKFPLLTTRRLGTRGHSKYHYYGIGIKESSAYYHSVYSGKGLTRFSGSKLKNEGGFTRKYSLSSKTGTLLPEFPSAQHLVYQGCISKDKVDTLIMMYKTHCQCILDNAINGNFEEIQHFLLHFWQGMPDHLLPLLENPVIIDIFCVCDSILYKVLTDVLIPATMQEMPESLLADIRNFAKNWEQWVVSSLENLPEALTDKKIPIVRRFVSSLKRQTSFLHLAQIARPALFDQHVVNSMVSDIEKVDLNSIGSQALLTISGSTDTESDIYTEHDSITVFQELKDLLKKNATVEAFIEWLDTVVEQRVIKTSKQNGRSLKKRAQDFLLKWSFFGARVMHNLTLNNASSFGSFHLIRMLLDEYILLAMETQFNNDKEQELQNLLDKYMKNSDASKAAFTASPSSCFLANRNKGSTASSDTVKNESHVETAYLPLSSSHPGGFPSALHPFPAGNTDTMPLTGQMELSQSTGHLMTPPISPAMASRGSVINQGPMAGRPPSVGPVLSAPSHCSTFPESIYPTHPQTNQDFYGTNSNYQTVFRAQPHPPSGLYPHRPEHGRCMAWSEQQLSRDFFSGSCAGSPYNSRPPSSYGPSSHSQDSHSMQFLNTGSFNFLSSTGAASCQGATLPPSSPNGYYGSSINYPESHRLGSMVNQHVSVISSVRSLPPYSDIHDPLNILDDSSRKQTSSFYADTSPSVACRTPVVASSLQTSIPSSSSQCMYGTSNQYPAQETLDSHGANSREMVSSLPPINTVFMGTAAGGT</sequence>
<accession>D2HNW6</accession>
<proteinExistence type="inferred from homology"/>
<evidence type="ECO:0000250" key="1">
    <source>
        <dbReference type="UniProtKB" id="Q8C7R7"/>
    </source>
</evidence>
<evidence type="ECO:0000250" key="2">
    <source>
        <dbReference type="UniProtKB" id="Q8HWS3"/>
    </source>
</evidence>
<evidence type="ECO:0000255" key="3">
    <source>
        <dbReference type="PROSITE-ProRule" id="PRU00858"/>
    </source>
</evidence>
<evidence type="ECO:0000256" key="4">
    <source>
        <dbReference type="SAM" id="MobiDB-lite"/>
    </source>
</evidence>
<reference key="1">
    <citation type="journal article" date="2010" name="Nature">
        <title>The sequence and de novo assembly of the giant panda genome.</title>
        <authorList>
            <person name="Li R."/>
            <person name="Fan W."/>
            <person name="Tian G."/>
            <person name="Zhu H."/>
            <person name="He L."/>
            <person name="Cai J."/>
            <person name="Huang Q."/>
            <person name="Cai Q."/>
            <person name="Li B."/>
            <person name="Bai Y."/>
            <person name="Zhang Z."/>
            <person name="Zhang Y."/>
            <person name="Wang W."/>
            <person name="Li J."/>
            <person name="Wei F."/>
            <person name="Li H."/>
            <person name="Jian M."/>
            <person name="Li J."/>
            <person name="Zhang Z."/>
            <person name="Nielsen R."/>
            <person name="Li D."/>
            <person name="Gu W."/>
            <person name="Yang Z."/>
            <person name="Xuan Z."/>
            <person name="Ryder O.A."/>
            <person name="Leung F.C."/>
            <person name="Zhou Y."/>
            <person name="Cao J."/>
            <person name="Sun X."/>
            <person name="Fu Y."/>
            <person name="Fang X."/>
            <person name="Guo X."/>
            <person name="Wang B."/>
            <person name="Hou R."/>
            <person name="Shen F."/>
            <person name="Mu B."/>
            <person name="Ni P."/>
            <person name="Lin R."/>
            <person name="Qian W."/>
            <person name="Wang G."/>
            <person name="Yu C."/>
            <person name="Nie W."/>
            <person name="Wang J."/>
            <person name="Wu Z."/>
            <person name="Liang H."/>
            <person name="Min J."/>
            <person name="Wu Q."/>
            <person name="Cheng S."/>
            <person name="Ruan J."/>
            <person name="Wang M."/>
            <person name="Shi Z."/>
            <person name="Wen M."/>
            <person name="Liu B."/>
            <person name="Ren X."/>
            <person name="Zheng H."/>
            <person name="Dong D."/>
            <person name="Cook K."/>
            <person name="Shan G."/>
            <person name="Zhang H."/>
            <person name="Kosiol C."/>
            <person name="Xie X."/>
            <person name="Lu Z."/>
            <person name="Zheng H."/>
            <person name="Li Y."/>
            <person name="Steiner C.C."/>
            <person name="Lam T.T."/>
            <person name="Lin S."/>
            <person name="Zhang Q."/>
            <person name="Li G."/>
            <person name="Tian J."/>
            <person name="Gong T."/>
            <person name="Liu H."/>
            <person name="Zhang D."/>
            <person name="Fang L."/>
            <person name="Ye C."/>
            <person name="Zhang J."/>
            <person name="Hu W."/>
            <person name="Xu A."/>
            <person name="Ren Y."/>
            <person name="Zhang G."/>
            <person name="Bruford M.W."/>
            <person name="Li Q."/>
            <person name="Ma L."/>
            <person name="Guo Y."/>
            <person name="An N."/>
            <person name="Hu Y."/>
            <person name="Zheng Y."/>
            <person name="Shi Y."/>
            <person name="Li Z."/>
            <person name="Liu Q."/>
            <person name="Chen Y."/>
            <person name="Zhao J."/>
            <person name="Qu N."/>
            <person name="Zhao S."/>
            <person name="Tian F."/>
            <person name="Wang X."/>
            <person name="Wang H."/>
            <person name="Xu L."/>
            <person name="Liu X."/>
            <person name="Vinar T."/>
            <person name="Wang Y."/>
            <person name="Lam T.W."/>
            <person name="Yiu S.M."/>
            <person name="Liu S."/>
            <person name="Zhang H."/>
            <person name="Li D."/>
            <person name="Huang Y."/>
            <person name="Wang X."/>
            <person name="Yang G."/>
            <person name="Jiang Z."/>
            <person name="Wang J."/>
            <person name="Qin N."/>
            <person name="Li L."/>
            <person name="Li J."/>
            <person name="Bolund L."/>
            <person name="Kristiansen K."/>
            <person name="Wong G.K."/>
            <person name="Olson M."/>
            <person name="Zhang X."/>
            <person name="Li S."/>
            <person name="Yang H."/>
            <person name="Wang J."/>
            <person name="Wang J."/>
        </authorList>
    </citation>
    <scope>NUCLEOTIDE SEQUENCE [LARGE SCALE GENOMIC DNA]</scope>
</reference>
<keyword id="KW-0217">Developmental protein</keyword>
<keyword id="KW-0221">Differentiation</keyword>
<keyword id="KW-0238">DNA-binding</keyword>
<keyword id="KW-0539">Nucleus</keyword>
<keyword id="KW-1185">Reference proteome</keyword>
<keyword id="KW-0804">Transcription</keyword>
<keyword id="KW-0805">Transcription regulation</keyword>
<feature type="chain" id="PRO_0000392997" description="DNA-binding protein RFX6">
    <location>
        <begin position="1"/>
        <end position="928"/>
    </location>
</feature>
<feature type="DNA-binding region" description="RFX-type winged-helix" evidence="3">
    <location>
        <begin position="124"/>
        <end position="199"/>
    </location>
</feature>
<feature type="region of interest" description="Disordered" evidence="4">
    <location>
        <begin position="1"/>
        <end position="22"/>
    </location>
</feature>
<feature type="region of interest" description="Disordered" evidence="4">
    <location>
        <begin position="53"/>
        <end position="102"/>
    </location>
</feature>
<feature type="compositionally biased region" description="Basic and acidic residues" evidence="4">
    <location>
        <begin position="92"/>
        <end position="101"/>
    </location>
</feature>
<comment type="function">
    <text evidence="2">Transcription factor required to direct islet cell differentiation during endocrine pancreas development. Specifically required for the differentiation of 4 of the 5 islet cell types and for the production of insulin. Not required for pancreatic PP (polypeptide-producing) cells differentiation. Acts downstream of NEUROG3 and regulates the transcription factors involved in beta-cell maturation and function, thereby restricting the expression of the beta-cell differentiation and specification genes, and thus the beta-cell fate choice. Activates transcription by forming a heterodimer with RFX3 and binding to the X-box in the promoter of target genes. Involved in glucose-stimulated insulin secretion by promoting insulin and L-type calcium channel gene transcription.</text>
</comment>
<comment type="subunit">
    <text evidence="1">Interacts with RFX3.</text>
</comment>
<comment type="subcellular location">
    <subcellularLocation>
        <location evidence="2">Nucleus</location>
    </subcellularLocation>
</comment>
<comment type="similarity">
    <text evidence="3">Belongs to the RFX family.</text>
</comment>
<protein>
    <recommendedName>
        <fullName>DNA-binding protein RFX6</fullName>
    </recommendedName>
    <alternativeName>
        <fullName>Regulatory factor X 6</fullName>
    </alternativeName>
</protein>
<dbReference type="EMBL" id="GL193101">
    <property type="protein sequence ID" value="EFB21427.1"/>
    <property type="molecule type" value="Genomic_DNA"/>
</dbReference>
<dbReference type="RefSeq" id="XP_002924145.1">
    <property type="nucleotide sequence ID" value="XM_002924099.1"/>
</dbReference>
<dbReference type="SMR" id="D2HNW6"/>
<dbReference type="STRING" id="9646.ENSAMEP00000006158"/>
<dbReference type="Ensembl" id="ENSAMET00000006412.2">
    <property type="protein sequence ID" value="ENSAMEP00000006158.1"/>
    <property type="gene ID" value="ENSAMEG00000005843.2"/>
</dbReference>
<dbReference type="GeneID" id="100476328"/>
<dbReference type="KEGG" id="aml:100476328"/>
<dbReference type="CTD" id="222546"/>
<dbReference type="eggNOG" id="KOG3712">
    <property type="taxonomic scope" value="Eukaryota"/>
</dbReference>
<dbReference type="GeneTree" id="ENSGT01050000244879"/>
<dbReference type="HOGENOM" id="CLU_013981_0_0_1"/>
<dbReference type="InParanoid" id="D2HNW6"/>
<dbReference type="OMA" id="FAKNWEH"/>
<dbReference type="OrthoDB" id="10056949at2759"/>
<dbReference type="TreeFam" id="TF321340"/>
<dbReference type="Proteomes" id="UP000008912">
    <property type="component" value="Unassembled WGS sequence"/>
</dbReference>
<dbReference type="GO" id="GO:0005634">
    <property type="term" value="C:nucleus"/>
    <property type="evidence" value="ECO:0000250"/>
    <property type="project" value="UniProtKB"/>
</dbReference>
<dbReference type="GO" id="GO:0001228">
    <property type="term" value="F:DNA-binding transcription activator activity, RNA polymerase II-specific"/>
    <property type="evidence" value="ECO:0007669"/>
    <property type="project" value="Ensembl"/>
</dbReference>
<dbReference type="GO" id="GO:0000978">
    <property type="term" value="F:RNA polymerase II cis-regulatory region sequence-specific DNA binding"/>
    <property type="evidence" value="ECO:0007669"/>
    <property type="project" value="TreeGrafter"/>
</dbReference>
<dbReference type="GO" id="GO:0000976">
    <property type="term" value="F:transcription cis-regulatory region binding"/>
    <property type="evidence" value="ECO:0000250"/>
    <property type="project" value="UniProtKB"/>
</dbReference>
<dbReference type="GO" id="GO:0031018">
    <property type="term" value="P:endocrine pancreas development"/>
    <property type="evidence" value="ECO:0000250"/>
    <property type="project" value="UniProtKB"/>
</dbReference>
<dbReference type="GO" id="GO:0042593">
    <property type="term" value="P:glucose homeostasis"/>
    <property type="evidence" value="ECO:0000250"/>
    <property type="project" value="UniProtKB"/>
</dbReference>
<dbReference type="GO" id="GO:0003310">
    <property type="term" value="P:pancreatic A cell differentiation"/>
    <property type="evidence" value="ECO:0000250"/>
    <property type="project" value="UniProtKB"/>
</dbReference>
<dbReference type="GO" id="GO:0003311">
    <property type="term" value="P:pancreatic D cell differentiation"/>
    <property type="evidence" value="ECO:0000250"/>
    <property type="project" value="UniProtKB"/>
</dbReference>
<dbReference type="GO" id="GO:0090104">
    <property type="term" value="P:pancreatic epsilon cell differentiation"/>
    <property type="evidence" value="ECO:0000250"/>
    <property type="project" value="UniProtKB"/>
</dbReference>
<dbReference type="GO" id="GO:0045893">
    <property type="term" value="P:positive regulation of DNA-templated transcription"/>
    <property type="evidence" value="ECO:0000250"/>
    <property type="project" value="UniProtKB"/>
</dbReference>
<dbReference type="GO" id="GO:0035774">
    <property type="term" value="P:positive regulation of insulin secretion involved in cellular response to glucose stimulus"/>
    <property type="evidence" value="ECO:0000250"/>
    <property type="project" value="UniProtKB"/>
</dbReference>
<dbReference type="GO" id="GO:0045944">
    <property type="term" value="P:positive regulation of transcription by RNA polymerase II"/>
    <property type="evidence" value="ECO:0000250"/>
    <property type="project" value="UniProtKB"/>
</dbReference>
<dbReference type="GO" id="GO:0050796">
    <property type="term" value="P:regulation of insulin secretion"/>
    <property type="evidence" value="ECO:0000250"/>
    <property type="project" value="UniProtKB"/>
</dbReference>
<dbReference type="GO" id="GO:0003309">
    <property type="term" value="P:type B pancreatic cell differentiation"/>
    <property type="evidence" value="ECO:0000250"/>
    <property type="project" value="UniProtKB"/>
</dbReference>
<dbReference type="FunFam" id="1.10.10.10:FF:000211">
    <property type="entry name" value="Regulatory factor X, 6"/>
    <property type="match status" value="1"/>
</dbReference>
<dbReference type="Gene3D" id="1.10.10.10">
    <property type="entry name" value="Winged helix-like DNA-binding domain superfamily/Winged helix DNA-binding domain"/>
    <property type="match status" value="1"/>
</dbReference>
<dbReference type="InterPro" id="IPR003150">
    <property type="entry name" value="DNA-bd_RFX"/>
</dbReference>
<dbReference type="InterPro" id="IPR039779">
    <property type="entry name" value="RFX-like"/>
</dbReference>
<dbReference type="InterPro" id="IPR036388">
    <property type="entry name" value="WH-like_DNA-bd_sf"/>
</dbReference>
<dbReference type="InterPro" id="IPR036390">
    <property type="entry name" value="WH_DNA-bd_sf"/>
</dbReference>
<dbReference type="PANTHER" id="PTHR12619:SF28">
    <property type="entry name" value="DNA-BINDING PROTEIN RFX6"/>
    <property type="match status" value="1"/>
</dbReference>
<dbReference type="PANTHER" id="PTHR12619">
    <property type="entry name" value="RFX TRANSCRIPTION FACTOR FAMILY"/>
    <property type="match status" value="1"/>
</dbReference>
<dbReference type="Pfam" id="PF25340">
    <property type="entry name" value="BCD_RFX"/>
    <property type="match status" value="1"/>
</dbReference>
<dbReference type="Pfam" id="PF02257">
    <property type="entry name" value="RFX_DNA_binding"/>
    <property type="match status" value="1"/>
</dbReference>
<dbReference type="SUPFAM" id="SSF46785">
    <property type="entry name" value="Winged helix' DNA-binding domain"/>
    <property type="match status" value="1"/>
</dbReference>
<dbReference type="PROSITE" id="PS51526">
    <property type="entry name" value="RFX_DBD"/>
    <property type="match status" value="1"/>
</dbReference>